<reference key="1">
    <citation type="journal article" date="2002" name="Nature">
        <title>The genome sequence of Schizosaccharomyces pombe.</title>
        <authorList>
            <person name="Wood V."/>
            <person name="Gwilliam R."/>
            <person name="Rajandream M.A."/>
            <person name="Lyne M.H."/>
            <person name="Lyne R."/>
            <person name="Stewart A."/>
            <person name="Sgouros J.G."/>
            <person name="Peat N."/>
            <person name="Hayles J."/>
            <person name="Baker S.G."/>
            <person name="Basham D."/>
            <person name="Bowman S."/>
            <person name="Brooks K."/>
            <person name="Brown D."/>
            <person name="Brown S."/>
            <person name="Chillingworth T."/>
            <person name="Churcher C.M."/>
            <person name="Collins M."/>
            <person name="Connor R."/>
            <person name="Cronin A."/>
            <person name="Davis P."/>
            <person name="Feltwell T."/>
            <person name="Fraser A."/>
            <person name="Gentles S."/>
            <person name="Goble A."/>
            <person name="Hamlin N."/>
            <person name="Harris D.E."/>
            <person name="Hidalgo J."/>
            <person name="Hodgson G."/>
            <person name="Holroyd S."/>
            <person name="Hornsby T."/>
            <person name="Howarth S."/>
            <person name="Huckle E.J."/>
            <person name="Hunt S."/>
            <person name="Jagels K."/>
            <person name="James K.D."/>
            <person name="Jones L."/>
            <person name="Jones M."/>
            <person name="Leather S."/>
            <person name="McDonald S."/>
            <person name="McLean J."/>
            <person name="Mooney P."/>
            <person name="Moule S."/>
            <person name="Mungall K.L."/>
            <person name="Murphy L.D."/>
            <person name="Niblett D."/>
            <person name="Odell C."/>
            <person name="Oliver K."/>
            <person name="O'Neil S."/>
            <person name="Pearson D."/>
            <person name="Quail M.A."/>
            <person name="Rabbinowitsch E."/>
            <person name="Rutherford K.M."/>
            <person name="Rutter S."/>
            <person name="Saunders D."/>
            <person name="Seeger K."/>
            <person name="Sharp S."/>
            <person name="Skelton J."/>
            <person name="Simmonds M.N."/>
            <person name="Squares R."/>
            <person name="Squares S."/>
            <person name="Stevens K."/>
            <person name="Taylor K."/>
            <person name="Taylor R.G."/>
            <person name="Tivey A."/>
            <person name="Walsh S.V."/>
            <person name="Warren T."/>
            <person name="Whitehead S."/>
            <person name="Woodward J.R."/>
            <person name="Volckaert G."/>
            <person name="Aert R."/>
            <person name="Robben J."/>
            <person name="Grymonprez B."/>
            <person name="Weltjens I."/>
            <person name="Vanstreels E."/>
            <person name="Rieger M."/>
            <person name="Schaefer M."/>
            <person name="Mueller-Auer S."/>
            <person name="Gabel C."/>
            <person name="Fuchs M."/>
            <person name="Duesterhoeft A."/>
            <person name="Fritzc C."/>
            <person name="Holzer E."/>
            <person name="Moestl D."/>
            <person name="Hilbert H."/>
            <person name="Borzym K."/>
            <person name="Langer I."/>
            <person name="Beck A."/>
            <person name="Lehrach H."/>
            <person name="Reinhardt R."/>
            <person name="Pohl T.M."/>
            <person name="Eger P."/>
            <person name="Zimmermann W."/>
            <person name="Wedler H."/>
            <person name="Wambutt R."/>
            <person name="Purnelle B."/>
            <person name="Goffeau A."/>
            <person name="Cadieu E."/>
            <person name="Dreano S."/>
            <person name="Gloux S."/>
            <person name="Lelaure V."/>
            <person name="Mottier S."/>
            <person name="Galibert F."/>
            <person name="Aves S.J."/>
            <person name="Xiang Z."/>
            <person name="Hunt C."/>
            <person name="Moore K."/>
            <person name="Hurst S.M."/>
            <person name="Lucas M."/>
            <person name="Rochet M."/>
            <person name="Gaillardin C."/>
            <person name="Tallada V.A."/>
            <person name="Garzon A."/>
            <person name="Thode G."/>
            <person name="Daga R.R."/>
            <person name="Cruzado L."/>
            <person name="Jimenez J."/>
            <person name="Sanchez M."/>
            <person name="del Rey F."/>
            <person name="Benito J."/>
            <person name="Dominguez A."/>
            <person name="Revuelta J.L."/>
            <person name="Moreno S."/>
            <person name="Armstrong J."/>
            <person name="Forsburg S.L."/>
            <person name="Cerutti L."/>
            <person name="Lowe T."/>
            <person name="McCombie W.R."/>
            <person name="Paulsen I."/>
            <person name="Potashkin J."/>
            <person name="Shpakovski G.V."/>
            <person name="Ussery D."/>
            <person name="Barrell B.G."/>
            <person name="Nurse P."/>
        </authorList>
    </citation>
    <scope>NUCLEOTIDE SEQUENCE [LARGE SCALE GENOMIC DNA]</scope>
    <source>
        <strain>972 / ATCC 24843</strain>
    </source>
</reference>
<keyword id="KW-0963">Cytoplasm</keyword>
<keyword id="KW-0539">Nucleus</keyword>
<keyword id="KW-0653">Protein transport</keyword>
<keyword id="KW-1185">Reference proteome</keyword>
<keyword id="KW-0813">Transport</keyword>
<feature type="chain" id="PRO_0000316200" description="Coatomer subunit delta">
    <location>
        <begin position="1"/>
        <end position="240"/>
    </location>
</feature>
<feature type="region of interest" description="Disordered" evidence="2">
    <location>
        <begin position="215"/>
        <end position="240"/>
    </location>
</feature>
<feature type="compositionally biased region" description="Low complexity" evidence="2">
    <location>
        <begin position="215"/>
        <end position="226"/>
    </location>
</feature>
<feature type="compositionally biased region" description="Basic residues" evidence="2">
    <location>
        <begin position="231"/>
        <end position="240"/>
    </location>
</feature>
<organism>
    <name type="scientific">Schizosaccharomyces pombe (strain 972 / ATCC 24843)</name>
    <name type="common">Fission yeast</name>
    <dbReference type="NCBI Taxonomy" id="284812"/>
    <lineage>
        <taxon>Eukaryota</taxon>
        <taxon>Fungi</taxon>
        <taxon>Dikarya</taxon>
        <taxon>Ascomycota</taxon>
        <taxon>Taphrinomycotina</taxon>
        <taxon>Schizosaccharomycetes</taxon>
        <taxon>Schizosaccharomycetales</taxon>
        <taxon>Schizosaccharomycetaceae</taxon>
        <taxon>Schizosaccharomyces</taxon>
    </lineage>
</organism>
<name>COPD_SCHPO</name>
<sequence length="240" mass="27098">MVVLAVSIVNRGGKAIISRQFREMSRVRVESLLSSFPALVSEKSQNTTVESDNVRFVYQPLDELYIVLITNLQSNILQDIDTLHLLSQVVTSICSSLEEREILEYAFEIFTAFDEATSLGYRDNVSLTQIKTYLEMESHEEKIQEIVSRNKEIEATEERKRRIKQLELQKKEAARRAAQNLPSADAYESIGYQTVNTTFATSNVEDESAMESYHAAAKASSAPKAKGMQLGKKKNTSLLY</sequence>
<evidence type="ECO:0000250" key="1"/>
<evidence type="ECO:0000256" key="2">
    <source>
        <dbReference type="SAM" id="MobiDB-lite"/>
    </source>
</evidence>
<evidence type="ECO:0000305" key="3"/>
<proteinExistence type="inferred from homology"/>
<gene>
    <name type="primary">ret2</name>
    <name type="ORF">SPCC285.08</name>
</gene>
<comment type="function">
    <text evidence="1">The coatomer is a cytosolic protein complex that binds to dilysine motifs and reversibly associates with Golgi non-clathrin-coated vesicles, which further mediate biosynthetic protein transport from the ER, via the Golgi up to the trans Golgi network. Coatomer complex is required for budding from Golgi membranes, and is essential for the retrograde Golgi-to-ER transport of dilysine-tagged proteins (By similarity).</text>
</comment>
<comment type="subunit">
    <text evidence="1">Oligomeric complex that consists of at least the alpha, beta, beta', gamma, delta, epsilon and zeta subunits.</text>
</comment>
<comment type="subcellular location">
    <subcellularLocation>
        <location>Cytoplasm</location>
    </subcellularLocation>
    <subcellularLocation>
        <location>Nucleus</location>
    </subcellularLocation>
</comment>
<comment type="similarity">
    <text evidence="3">Belongs to the adaptor complexes medium subunit family. Delta-COP subfamily.</text>
</comment>
<dbReference type="EMBL" id="CU329672">
    <property type="protein sequence ID" value="CAA20847.1"/>
    <property type="molecule type" value="Genomic_DNA"/>
</dbReference>
<dbReference type="PIR" id="T41254">
    <property type="entry name" value="T41254"/>
</dbReference>
<dbReference type="RefSeq" id="NP_588336.1">
    <property type="nucleotide sequence ID" value="NM_001023327.2"/>
</dbReference>
<dbReference type="SMR" id="O74496"/>
<dbReference type="BioGRID" id="275527">
    <property type="interactions" value="3"/>
</dbReference>
<dbReference type="STRING" id="284812.O74496"/>
<dbReference type="iPTMnet" id="O74496"/>
<dbReference type="PaxDb" id="4896-SPCC285.08.1"/>
<dbReference type="EnsemblFungi" id="SPCC285.08.1">
    <property type="protein sequence ID" value="SPCC285.08.1:pep"/>
    <property type="gene ID" value="SPCC285.08"/>
</dbReference>
<dbReference type="GeneID" id="2538953"/>
<dbReference type="KEGG" id="spo:2538953"/>
<dbReference type="PomBase" id="SPCC285.08">
    <property type="gene designation" value="ret2"/>
</dbReference>
<dbReference type="VEuPathDB" id="FungiDB:SPCC285.08"/>
<dbReference type="eggNOG" id="KOG2635">
    <property type="taxonomic scope" value="Eukaryota"/>
</dbReference>
<dbReference type="HOGENOM" id="CLU_076799_0_0_1"/>
<dbReference type="InParanoid" id="O74496"/>
<dbReference type="OMA" id="NQRYIYT"/>
<dbReference type="PhylomeDB" id="O74496"/>
<dbReference type="PRO" id="PR:O74496"/>
<dbReference type="Proteomes" id="UP000002485">
    <property type="component" value="Chromosome III"/>
</dbReference>
<dbReference type="GO" id="GO:0030126">
    <property type="term" value="C:COPI vesicle coat"/>
    <property type="evidence" value="ECO:0000266"/>
    <property type="project" value="PomBase"/>
</dbReference>
<dbReference type="GO" id="GO:0005829">
    <property type="term" value="C:cytosol"/>
    <property type="evidence" value="ECO:0007005"/>
    <property type="project" value="PomBase"/>
</dbReference>
<dbReference type="GO" id="GO:0005634">
    <property type="term" value="C:nucleus"/>
    <property type="evidence" value="ECO:0007005"/>
    <property type="project" value="PomBase"/>
</dbReference>
<dbReference type="GO" id="GO:0006888">
    <property type="term" value="P:endoplasmic reticulum to Golgi vesicle-mediated transport"/>
    <property type="evidence" value="ECO:0000266"/>
    <property type="project" value="PomBase"/>
</dbReference>
<dbReference type="GO" id="GO:0006886">
    <property type="term" value="P:intracellular protein transport"/>
    <property type="evidence" value="ECO:0000305"/>
    <property type="project" value="PomBase"/>
</dbReference>
<dbReference type="GO" id="GO:0006890">
    <property type="term" value="P:retrograde vesicle-mediated transport, Golgi to endoplasmic reticulum"/>
    <property type="evidence" value="ECO:0000266"/>
    <property type="project" value="PomBase"/>
</dbReference>
<dbReference type="CDD" id="cd14830">
    <property type="entry name" value="Delta_COP_N"/>
    <property type="match status" value="1"/>
</dbReference>
<dbReference type="FunFam" id="3.30.450.60:FF:000003">
    <property type="entry name" value="Coatomer subunit delta"/>
    <property type="match status" value="1"/>
</dbReference>
<dbReference type="Gene3D" id="3.30.450.60">
    <property type="match status" value="1"/>
</dbReference>
<dbReference type="InterPro" id="IPR022775">
    <property type="entry name" value="AP_mu_sigma_su"/>
</dbReference>
<dbReference type="InterPro" id="IPR027059">
    <property type="entry name" value="Coatomer_dsu"/>
</dbReference>
<dbReference type="InterPro" id="IPR011012">
    <property type="entry name" value="Longin-like_dom_sf"/>
</dbReference>
<dbReference type="PANTHER" id="PTHR10121">
    <property type="entry name" value="COATOMER SUBUNIT DELTA"/>
    <property type="match status" value="1"/>
</dbReference>
<dbReference type="PANTHER" id="PTHR10121:SF0">
    <property type="entry name" value="COATOMER SUBUNIT DELTA"/>
    <property type="match status" value="1"/>
</dbReference>
<dbReference type="Pfam" id="PF01217">
    <property type="entry name" value="Clat_adaptor_s"/>
    <property type="match status" value="1"/>
</dbReference>
<dbReference type="SUPFAM" id="SSF64356">
    <property type="entry name" value="SNARE-like"/>
    <property type="match status" value="1"/>
</dbReference>
<protein>
    <recommendedName>
        <fullName>Coatomer subunit delta</fullName>
    </recommendedName>
    <alternativeName>
        <fullName>Delta-coat protein</fullName>
        <shortName>Delta-COP</shortName>
    </alternativeName>
</protein>
<accession>O74496</accession>